<feature type="chain" id="PRO_0000365335" description="Eukaryotic translation initiation factor 3 subunit I">
    <location>
        <begin position="1"/>
        <end position="327"/>
    </location>
</feature>
<feature type="repeat" description="WD 1">
    <location>
        <begin position="8"/>
        <end position="49"/>
    </location>
</feature>
<feature type="repeat" description="WD 2">
    <location>
        <begin position="51"/>
        <end position="91"/>
    </location>
</feature>
<feature type="repeat" description="WD 3">
    <location>
        <begin position="144"/>
        <end position="183"/>
    </location>
</feature>
<feature type="repeat" description="WD 4">
    <location>
        <begin position="188"/>
        <end position="227"/>
    </location>
</feature>
<feature type="repeat" description="WD 5">
    <location>
        <begin position="229"/>
        <end position="268"/>
    </location>
</feature>
<feature type="repeat" description="WD 6">
    <location>
        <begin position="285"/>
        <end position="324"/>
    </location>
</feature>
<accession>A8QBF3</accession>
<reference key="1">
    <citation type="journal article" date="2007" name="Science">
        <title>Draft genome of the filarial nematode parasite Brugia malayi.</title>
        <authorList>
            <person name="Ghedin E."/>
            <person name="Wang S."/>
            <person name="Spiro D."/>
            <person name="Caler E."/>
            <person name="Zhao Q."/>
            <person name="Crabtree J."/>
            <person name="Allen J.E."/>
            <person name="Delcher A.L."/>
            <person name="Guiliano D.B."/>
            <person name="Miranda-Saavedra D."/>
            <person name="Angiuoli S.V."/>
            <person name="Creasy T."/>
            <person name="Amedeo P."/>
            <person name="Haas B."/>
            <person name="El-Sayed N.M."/>
            <person name="Wortman J.R."/>
            <person name="Feldblyum T."/>
            <person name="Tallon L."/>
            <person name="Schatz M."/>
            <person name="Shumway M."/>
            <person name="Koo H."/>
            <person name="Salzberg S.L."/>
            <person name="Schobel S."/>
            <person name="Pertea M."/>
            <person name="Pop M."/>
            <person name="White O."/>
            <person name="Barton G.J."/>
            <person name="Carlow C.K.S."/>
            <person name="Crawford M.J."/>
            <person name="Daub J."/>
            <person name="Dimmic M.W."/>
            <person name="Estes C.F."/>
            <person name="Foster J.M."/>
            <person name="Ganatra M."/>
            <person name="Gregory W.F."/>
            <person name="Johnson N.M."/>
            <person name="Jin J."/>
            <person name="Komuniecki R."/>
            <person name="Korf I."/>
            <person name="Kumar S."/>
            <person name="Laney S."/>
            <person name="Li B.-W."/>
            <person name="Li W."/>
            <person name="Lindblom T.H."/>
            <person name="Lustigman S."/>
            <person name="Ma D."/>
            <person name="Maina C.V."/>
            <person name="Martin D.M."/>
            <person name="McCarter J.P."/>
            <person name="McReynolds L."/>
            <person name="Mitreva M."/>
            <person name="Nutman T.B."/>
            <person name="Parkinson J."/>
            <person name="Peregrin-Alvarez J.M."/>
            <person name="Poole C."/>
            <person name="Ren Q."/>
            <person name="Saunders L."/>
            <person name="Sluder A.E."/>
            <person name="Smith K."/>
            <person name="Stanke M."/>
            <person name="Unnasch T.R."/>
            <person name="Ware J."/>
            <person name="Wei A.D."/>
            <person name="Weil G."/>
            <person name="Williams D.J."/>
            <person name="Zhang Y."/>
            <person name="Williams S.A."/>
            <person name="Fraser-Liggett C."/>
            <person name="Slatko B."/>
            <person name="Blaxter M.L."/>
            <person name="Scott A.L."/>
        </authorList>
    </citation>
    <scope>NUCLEOTIDE SEQUENCE [LARGE SCALE GENOMIC DNA]</scope>
</reference>
<sequence>MKPLSLKGHDRALTRVRINRDGDLLFSAGKDKSPCVWYMENGERIGTYDGHNGVIWDIDVSWDTRHFCSASGDVFVKLWNCETGDVINSVSTPTAARSISLSYSGNLIAFTTIKMTQNVASLFVYDIRDGSQMSGENQPTFRKSLQTQANSCVWTHLDDTVCVGNEKGNVHQYDIRKGDDIVNFNDEAHKFQINDMQMSTDESFLITASKDKTARLFDARTLDCLKTYKAERPVNSAAISPIRDHVILGGGEEAMKVTQTTAASGHFEAKLYHLVFEEEFARFKGHFGPINTLAFHPGGNCVVSGGEDGYVRIQEFDTDYLKFDYDF</sequence>
<keyword id="KW-0963">Cytoplasm</keyword>
<keyword id="KW-0396">Initiation factor</keyword>
<keyword id="KW-0648">Protein biosynthesis</keyword>
<keyword id="KW-1185">Reference proteome</keyword>
<keyword id="KW-0677">Repeat</keyword>
<keyword id="KW-0853">WD repeat</keyword>
<protein>
    <recommendedName>
        <fullName evidence="1">Eukaryotic translation initiation factor 3 subunit I</fullName>
        <shortName evidence="1">eIF3i</shortName>
    </recommendedName>
</protein>
<gene>
    <name type="ORF">Bm1_48300</name>
</gene>
<dbReference type="EMBL" id="DS239429">
    <property type="protein sequence ID" value="EDP29802.1"/>
    <property type="molecule type" value="Genomic_DNA"/>
</dbReference>
<dbReference type="SMR" id="A8QBF3"/>
<dbReference type="FunCoup" id="A8QBF3">
    <property type="interactions" value="2017"/>
</dbReference>
<dbReference type="STRING" id="6279.A8QBF3"/>
<dbReference type="EnsemblMetazoa" id="Bm7127.1">
    <property type="protein sequence ID" value="Bm7127.1"/>
    <property type="gene ID" value="WBGene00227388"/>
</dbReference>
<dbReference type="GeneID" id="6104545"/>
<dbReference type="KEGG" id="bmy:BM_BM7127"/>
<dbReference type="CTD" id="6104545"/>
<dbReference type="WormBase" id="Bm7127">
    <property type="protein sequence ID" value="BM21046"/>
    <property type="gene ID" value="WBGene00227388"/>
</dbReference>
<dbReference type="HOGENOM" id="CLU_043845_0_1_1"/>
<dbReference type="InParanoid" id="A8QBF3"/>
<dbReference type="OMA" id="VWFSHNG"/>
<dbReference type="OrthoDB" id="24966at2759"/>
<dbReference type="Proteomes" id="UP000006672">
    <property type="component" value="Unassembled WGS sequence"/>
</dbReference>
<dbReference type="GO" id="GO:0016282">
    <property type="term" value="C:eukaryotic 43S preinitiation complex"/>
    <property type="evidence" value="ECO:0007669"/>
    <property type="project" value="UniProtKB-UniRule"/>
</dbReference>
<dbReference type="GO" id="GO:0033290">
    <property type="term" value="C:eukaryotic 48S preinitiation complex"/>
    <property type="evidence" value="ECO:0007669"/>
    <property type="project" value="UniProtKB-UniRule"/>
</dbReference>
<dbReference type="GO" id="GO:0071541">
    <property type="term" value="C:eukaryotic translation initiation factor 3 complex, eIF3m"/>
    <property type="evidence" value="ECO:0007669"/>
    <property type="project" value="TreeGrafter"/>
</dbReference>
<dbReference type="GO" id="GO:0003723">
    <property type="term" value="F:RNA binding"/>
    <property type="evidence" value="ECO:0007669"/>
    <property type="project" value="TreeGrafter"/>
</dbReference>
<dbReference type="GO" id="GO:0003743">
    <property type="term" value="F:translation initiation factor activity"/>
    <property type="evidence" value="ECO:0007669"/>
    <property type="project" value="UniProtKB-UniRule"/>
</dbReference>
<dbReference type="GO" id="GO:0001732">
    <property type="term" value="P:formation of cytoplasmic translation initiation complex"/>
    <property type="evidence" value="ECO:0007669"/>
    <property type="project" value="UniProtKB-UniRule"/>
</dbReference>
<dbReference type="Gene3D" id="2.130.10.10">
    <property type="entry name" value="YVTN repeat-like/Quinoprotein amine dehydrogenase"/>
    <property type="match status" value="1"/>
</dbReference>
<dbReference type="HAMAP" id="MF_03008">
    <property type="entry name" value="eIF3i"/>
    <property type="match status" value="1"/>
</dbReference>
<dbReference type="InterPro" id="IPR027525">
    <property type="entry name" value="eIF3i"/>
</dbReference>
<dbReference type="InterPro" id="IPR015943">
    <property type="entry name" value="WD40/YVTN_repeat-like_dom_sf"/>
</dbReference>
<dbReference type="InterPro" id="IPR036322">
    <property type="entry name" value="WD40_repeat_dom_sf"/>
</dbReference>
<dbReference type="InterPro" id="IPR001680">
    <property type="entry name" value="WD40_rpt"/>
</dbReference>
<dbReference type="PANTHER" id="PTHR19877">
    <property type="entry name" value="EUKARYOTIC TRANSLATION INITIATION FACTOR 3 SUBUNIT I"/>
    <property type="match status" value="1"/>
</dbReference>
<dbReference type="PANTHER" id="PTHR19877:SF1">
    <property type="entry name" value="EUKARYOTIC TRANSLATION INITIATION FACTOR 3 SUBUNIT I"/>
    <property type="match status" value="1"/>
</dbReference>
<dbReference type="Pfam" id="PF24805">
    <property type="entry name" value="EIF3I"/>
    <property type="match status" value="1"/>
</dbReference>
<dbReference type="SMART" id="SM00320">
    <property type="entry name" value="WD40"/>
    <property type="match status" value="6"/>
</dbReference>
<dbReference type="SUPFAM" id="SSF50978">
    <property type="entry name" value="WD40 repeat-like"/>
    <property type="match status" value="1"/>
</dbReference>
<dbReference type="PROSITE" id="PS50082">
    <property type="entry name" value="WD_REPEATS_2"/>
    <property type="match status" value="4"/>
</dbReference>
<dbReference type="PROSITE" id="PS50294">
    <property type="entry name" value="WD_REPEATS_REGION"/>
    <property type="match status" value="2"/>
</dbReference>
<evidence type="ECO:0000255" key="1">
    <source>
        <dbReference type="HAMAP-Rule" id="MF_03008"/>
    </source>
</evidence>
<organism>
    <name type="scientific">Brugia malayi</name>
    <name type="common">Filarial nematode worm</name>
    <dbReference type="NCBI Taxonomy" id="6279"/>
    <lineage>
        <taxon>Eukaryota</taxon>
        <taxon>Metazoa</taxon>
        <taxon>Ecdysozoa</taxon>
        <taxon>Nematoda</taxon>
        <taxon>Chromadorea</taxon>
        <taxon>Rhabditida</taxon>
        <taxon>Spirurina</taxon>
        <taxon>Spiruromorpha</taxon>
        <taxon>Filarioidea</taxon>
        <taxon>Onchocercidae</taxon>
        <taxon>Brugia</taxon>
    </lineage>
</organism>
<name>EIF3I_BRUMA</name>
<proteinExistence type="inferred from homology"/>
<comment type="function">
    <text evidence="1">Component of the eukaryotic translation initiation factor 3 (eIF-3) complex, which is involved in protein synthesis of a specialized repertoire of mRNAs and, together with other initiation factors, stimulates binding of mRNA and methionyl-tRNAi to the 40S ribosome. The eIF-3 complex specifically targets and initiates translation of a subset of mRNAs involved in cell proliferation.</text>
</comment>
<comment type="subunit">
    <text evidence="1">Component of the eukaryotic translation initiation factor 3 (eIF-3) complex.</text>
</comment>
<comment type="subcellular location">
    <subcellularLocation>
        <location evidence="1">Cytoplasm</location>
    </subcellularLocation>
</comment>
<comment type="similarity">
    <text evidence="1">Belongs to the eIF-3 subunit I family.</text>
</comment>